<evidence type="ECO:0000250" key="1"/>
<evidence type="ECO:0000255" key="2">
    <source>
        <dbReference type="PROSITE-ProRule" id="PRU00794"/>
    </source>
</evidence>
<evidence type="ECO:0000305" key="3"/>
<organism>
    <name type="scientific">Clarkia breweri</name>
    <name type="common">Fairy fans</name>
    <name type="synonym">Eucharidium breweri</name>
    <dbReference type="NCBI Taxonomy" id="36903"/>
    <lineage>
        <taxon>Eukaryota</taxon>
        <taxon>Viridiplantae</taxon>
        <taxon>Streptophyta</taxon>
        <taxon>Embryophyta</taxon>
        <taxon>Tracheophyta</taxon>
        <taxon>Spermatophyta</taxon>
        <taxon>Magnoliopsida</taxon>
        <taxon>eudicotyledons</taxon>
        <taxon>Gunneridae</taxon>
        <taxon>Pentapetalae</taxon>
        <taxon>rosids</taxon>
        <taxon>malvids</taxon>
        <taxon>Myrtales</taxon>
        <taxon>Onagraceae</taxon>
        <taxon>Onagroideae</taxon>
        <taxon>Onagreae</taxon>
        <taxon>Clarkia</taxon>
    </lineage>
</organism>
<proteinExistence type="inferred from homology"/>
<protein>
    <recommendedName>
        <fullName>Isopentenyl-diphosphate Delta-isomerase II</fullName>
        <ecNumber>5.3.3.2</ecNumber>
    </recommendedName>
    <alternativeName>
        <fullName>Isopentenyl pyrophosphate isomerase II</fullName>
        <shortName>IPP isomerase II</shortName>
    </alternativeName>
</protein>
<keyword id="KW-0149">Chlorophyll biosynthesis</keyword>
<keyword id="KW-0413">Isomerase</keyword>
<keyword id="KW-0414">Isoprene biosynthesis</keyword>
<keyword id="KW-0602">Photosynthesis</keyword>
<feature type="chain" id="PRO_0000205237" description="Isopentenyl-diphosphate Delta-isomerase II">
    <location>
        <begin position="1"/>
        <end position="286"/>
    </location>
</feature>
<feature type="domain" description="Nudix hydrolase" evidence="2">
    <location>
        <begin position="104"/>
        <end position="256"/>
    </location>
</feature>
<feature type="active site" evidence="1">
    <location>
        <position position="141"/>
    </location>
</feature>
<feature type="active site" evidence="1">
    <location>
        <position position="203"/>
    </location>
</feature>
<reference key="1">
    <citation type="online journal article" date="1996" name="Plant Gene Register">
        <title>Nucleotide sequences of Ipi genes from Arabidopsis and Clarkia.</title>
        <authorList>
            <person name="Blanc V.M."/>
            <person name="Mullin K."/>
            <person name="Pichersky E."/>
        </authorList>
        <locator>PGR96-036</locator>
    </citation>
    <scope>NUCLEOTIDE SEQUENCE [GENOMIC DNA]</scope>
</reference>
<accession>Q39471</accession>
<name>IDI2_CLABR</name>
<sequence length="286" mass="32561">MSLTSRLYKLRLSSLHSFGSLPILPPPLRSSRIAAPLSLRVSLSTRSIATSIAMGEAADAGMDAVQRRLMFDDECILVDEVDRVVGHESKYNCHMWEKIESGNMLHRAFSVFLFNSKFELLLQQRSATKVTFPLVWTNTCCSHPLYRESELIDENNLGVRNAAQRKLLDELGIPAEDVPVDEFTPLSRMLYKAPSDGKWGEHELDYLLFIVRDVAVHPNPDEVAEIKYVNREQLKELLKKADAGEEGLKLSPWFRLVVDNFLPKWWDHVEKGTLSEAVDMKSIHKL</sequence>
<dbReference type="EC" id="5.3.3.2"/>
<dbReference type="EMBL" id="U48963">
    <property type="protein sequence ID" value="AAB67743.1"/>
    <property type="status" value="ALT_INIT"/>
    <property type="molecule type" value="Genomic_DNA"/>
</dbReference>
<dbReference type="SMR" id="Q39471"/>
<dbReference type="UniPathway" id="UPA00059">
    <property type="reaction ID" value="UER00104"/>
</dbReference>
<dbReference type="UniPathway" id="UPA00668"/>
<dbReference type="GO" id="GO:0005737">
    <property type="term" value="C:cytoplasm"/>
    <property type="evidence" value="ECO:0007669"/>
    <property type="project" value="TreeGrafter"/>
</dbReference>
<dbReference type="GO" id="GO:0004452">
    <property type="term" value="F:isopentenyl-diphosphate delta-isomerase activity"/>
    <property type="evidence" value="ECO:0007669"/>
    <property type="project" value="UniProtKB-EC"/>
</dbReference>
<dbReference type="GO" id="GO:0015995">
    <property type="term" value="P:chlorophyll biosynthetic process"/>
    <property type="evidence" value="ECO:0007669"/>
    <property type="project" value="UniProtKB-UniPathway"/>
</dbReference>
<dbReference type="GO" id="GO:0050992">
    <property type="term" value="P:dimethylallyl diphosphate biosynthetic process"/>
    <property type="evidence" value="ECO:0007669"/>
    <property type="project" value="UniProtKB-UniPathway"/>
</dbReference>
<dbReference type="GO" id="GO:0009240">
    <property type="term" value="P:isopentenyl diphosphate biosynthetic process"/>
    <property type="evidence" value="ECO:0007669"/>
    <property type="project" value="TreeGrafter"/>
</dbReference>
<dbReference type="GO" id="GO:0015979">
    <property type="term" value="P:photosynthesis"/>
    <property type="evidence" value="ECO:0007669"/>
    <property type="project" value="UniProtKB-KW"/>
</dbReference>
<dbReference type="CDD" id="cd02885">
    <property type="entry name" value="NUDIX_IPP_Isomerase"/>
    <property type="match status" value="1"/>
</dbReference>
<dbReference type="FunFam" id="3.90.79.10:FF:000025">
    <property type="entry name" value="isopentenyl-diphosphate Delta-isomerase I"/>
    <property type="match status" value="1"/>
</dbReference>
<dbReference type="Gene3D" id="3.90.79.10">
    <property type="entry name" value="Nucleoside Triphosphate Pyrophosphohydrolase"/>
    <property type="match status" value="1"/>
</dbReference>
<dbReference type="InterPro" id="IPR011876">
    <property type="entry name" value="IsopentenylPP_isomerase_typ1"/>
</dbReference>
<dbReference type="InterPro" id="IPR015797">
    <property type="entry name" value="NUDIX_hydrolase-like_dom_sf"/>
</dbReference>
<dbReference type="InterPro" id="IPR000086">
    <property type="entry name" value="NUDIX_hydrolase_dom"/>
</dbReference>
<dbReference type="NCBIfam" id="TIGR02150">
    <property type="entry name" value="IPP_isom_1"/>
    <property type="match status" value="1"/>
</dbReference>
<dbReference type="PANTHER" id="PTHR10885">
    <property type="entry name" value="ISOPENTENYL-DIPHOSPHATE DELTA-ISOMERASE"/>
    <property type="match status" value="1"/>
</dbReference>
<dbReference type="PANTHER" id="PTHR10885:SF0">
    <property type="entry name" value="ISOPENTENYL-DIPHOSPHATE DELTA-ISOMERASE"/>
    <property type="match status" value="1"/>
</dbReference>
<dbReference type="Pfam" id="PF00293">
    <property type="entry name" value="NUDIX"/>
    <property type="match status" value="1"/>
</dbReference>
<dbReference type="SUPFAM" id="SSF55811">
    <property type="entry name" value="Nudix"/>
    <property type="match status" value="1"/>
</dbReference>
<dbReference type="PROSITE" id="PS51462">
    <property type="entry name" value="NUDIX"/>
    <property type="match status" value="1"/>
</dbReference>
<comment type="function">
    <text evidence="1">Catalyzes the 1,3-allylic rearrangement of the homoallylic substrate isopentenyl (IPP) to its highly electrophilic allylic isomer, dimethylallyl diphosphate (DMAPP).</text>
</comment>
<comment type="catalytic activity">
    <reaction>
        <text>isopentenyl diphosphate = dimethylallyl diphosphate</text>
        <dbReference type="Rhea" id="RHEA:23284"/>
        <dbReference type="ChEBI" id="CHEBI:57623"/>
        <dbReference type="ChEBI" id="CHEBI:128769"/>
        <dbReference type="EC" id="5.3.3.2"/>
    </reaction>
</comment>
<comment type="pathway">
    <text>Isoprenoid biosynthesis; dimethylallyl diphosphate biosynthesis; dimethylallyl diphosphate from isopentenyl diphosphate: step 1/1.</text>
</comment>
<comment type="pathway">
    <text>Porphyrin-containing compound metabolism; chlorophyll biosynthesis.</text>
</comment>
<comment type="similarity">
    <text evidence="3">Belongs to the IPP isomerase type 1 family.</text>
</comment>
<comment type="sequence caution" evidence="3">
    <conflict type="erroneous initiation">
        <sequence resource="EMBL-CDS" id="AAB67743"/>
    </conflict>
</comment>
<gene>
    <name type="primary">IPI2</name>
</gene>